<feature type="chain" id="PRO_0000372198" description="Putative antiporter subunit mnhF2">
    <location>
        <begin position="1"/>
        <end position="100"/>
    </location>
</feature>
<feature type="transmembrane region" description="Helical" evidence="2">
    <location>
        <begin position="5"/>
        <end position="25"/>
    </location>
</feature>
<feature type="transmembrane region" description="Helical" evidence="2">
    <location>
        <begin position="38"/>
        <end position="60"/>
    </location>
</feature>
<feature type="transmembrane region" description="Helical" evidence="2">
    <location>
        <begin position="70"/>
        <end position="92"/>
    </location>
</feature>
<organism>
    <name type="scientific">Staphylococcus aureus (strain Mu50 / ATCC 700699)</name>
    <dbReference type="NCBI Taxonomy" id="158878"/>
    <lineage>
        <taxon>Bacteria</taxon>
        <taxon>Bacillati</taxon>
        <taxon>Bacillota</taxon>
        <taxon>Bacilli</taxon>
        <taxon>Bacillales</taxon>
        <taxon>Staphylococcaceae</taxon>
        <taxon>Staphylococcus</taxon>
    </lineage>
</organism>
<proteinExistence type="inferred from homology"/>
<sequence length="100" mass="10730">MIQTITHIMIISSLIIFGIALIICLFRLIKGPTTADRVVTFDTTSAVVMSIVGVLSVLMGTVSFLDSIMLIAIISFVSSVSISRFIGGGHVFNGNNKRNL</sequence>
<accession>Q99VY7</accession>
<keyword id="KW-0050">Antiport</keyword>
<keyword id="KW-1003">Cell membrane</keyword>
<keyword id="KW-0406">Ion transport</keyword>
<keyword id="KW-0472">Membrane</keyword>
<keyword id="KW-0812">Transmembrane</keyword>
<keyword id="KW-1133">Transmembrane helix</keyword>
<keyword id="KW-0813">Transport</keyword>
<gene>
    <name type="primary">mnhF2</name>
    <name type="synonym">mrpF2</name>
    <name type="ordered locus">SAV0627</name>
</gene>
<dbReference type="EMBL" id="BA000017">
    <property type="protein sequence ID" value="BAB56789.1"/>
    <property type="molecule type" value="Genomic_DNA"/>
</dbReference>
<dbReference type="RefSeq" id="WP_000616642.1">
    <property type="nucleotide sequence ID" value="NC_002758.2"/>
</dbReference>
<dbReference type="SMR" id="Q99VY7"/>
<dbReference type="KEGG" id="sav:SAV0627"/>
<dbReference type="HOGENOM" id="CLU_125825_1_3_9"/>
<dbReference type="Proteomes" id="UP000002481">
    <property type="component" value="Chromosome"/>
</dbReference>
<dbReference type="GO" id="GO:0005886">
    <property type="term" value="C:plasma membrane"/>
    <property type="evidence" value="ECO:0007669"/>
    <property type="project" value="UniProtKB-SubCell"/>
</dbReference>
<dbReference type="GO" id="GO:0015385">
    <property type="term" value="F:sodium:proton antiporter activity"/>
    <property type="evidence" value="ECO:0007669"/>
    <property type="project" value="TreeGrafter"/>
</dbReference>
<dbReference type="InterPro" id="IPR007208">
    <property type="entry name" value="MrpF/PhaF-like"/>
</dbReference>
<dbReference type="NCBIfam" id="NF009300">
    <property type="entry name" value="PRK12657.1"/>
    <property type="match status" value="1"/>
</dbReference>
<dbReference type="PANTHER" id="PTHR34702">
    <property type="entry name" value="NA(+)/H(+) ANTIPORTER SUBUNIT F1"/>
    <property type="match status" value="1"/>
</dbReference>
<dbReference type="PANTHER" id="PTHR34702:SF1">
    <property type="entry name" value="NA(+)_H(+) ANTIPORTER SUBUNIT F"/>
    <property type="match status" value="1"/>
</dbReference>
<dbReference type="Pfam" id="PF04066">
    <property type="entry name" value="MrpF_PhaF"/>
    <property type="match status" value="1"/>
</dbReference>
<dbReference type="PIRSF" id="PIRSF028784">
    <property type="entry name" value="MrpF"/>
    <property type="match status" value="1"/>
</dbReference>
<evidence type="ECO:0000250" key="1"/>
<evidence type="ECO:0000255" key="2"/>
<evidence type="ECO:0000305" key="3"/>
<protein>
    <recommendedName>
        <fullName>Putative antiporter subunit mnhF2</fullName>
    </recommendedName>
    <alternativeName>
        <fullName>Mrp complex subunit F2</fullName>
    </alternativeName>
    <alternativeName>
        <fullName>Putative NADH-ubiquinone oxidoreductase subunit mnhF2</fullName>
    </alternativeName>
</protein>
<reference key="1">
    <citation type="journal article" date="2001" name="Lancet">
        <title>Whole genome sequencing of meticillin-resistant Staphylococcus aureus.</title>
        <authorList>
            <person name="Kuroda M."/>
            <person name="Ohta T."/>
            <person name="Uchiyama I."/>
            <person name="Baba T."/>
            <person name="Yuzawa H."/>
            <person name="Kobayashi I."/>
            <person name="Cui L."/>
            <person name="Oguchi A."/>
            <person name="Aoki K."/>
            <person name="Nagai Y."/>
            <person name="Lian J.-Q."/>
            <person name="Ito T."/>
            <person name="Kanamori M."/>
            <person name="Matsumaru H."/>
            <person name="Maruyama A."/>
            <person name="Murakami H."/>
            <person name="Hosoyama A."/>
            <person name="Mizutani-Ui Y."/>
            <person name="Takahashi N.K."/>
            <person name="Sawano T."/>
            <person name="Inoue R."/>
            <person name="Kaito C."/>
            <person name="Sekimizu K."/>
            <person name="Hirakawa H."/>
            <person name="Kuhara S."/>
            <person name="Goto S."/>
            <person name="Yabuzaki J."/>
            <person name="Kanehisa M."/>
            <person name="Yamashita A."/>
            <person name="Oshima K."/>
            <person name="Furuya K."/>
            <person name="Yoshino C."/>
            <person name="Shiba T."/>
            <person name="Hattori M."/>
            <person name="Ogasawara N."/>
            <person name="Hayashi H."/>
            <person name="Hiramatsu K."/>
        </authorList>
    </citation>
    <scope>NUCLEOTIDE SEQUENCE [LARGE SCALE GENOMIC DNA]</scope>
    <source>
        <strain>Mu50 / ATCC 700699</strain>
    </source>
</reference>
<comment type="subunit">
    <text evidence="1">May form a heterooligomeric complex that consists of seven subunits: mnhA2, mnhB2, mnhC2, mnhD2, mnhE2, mnhF2 and mnhG2.</text>
</comment>
<comment type="subcellular location">
    <subcellularLocation>
        <location evidence="3">Cell membrane</location>
        <topology evidence="3">Multi-pass membrane protein</topology>
    </subcellularLocation>
</comment>
<comment type="similarity">
    <text evidence="3">Belongs to the CPA3 antiporters (TC 2.A.63) subunit F family.</text>
</comment>
<name>MNHF2_STAAM</name>